<proteinExistence type="evidence at transcript level"/>
<protein>
    <recommendedName>
        <fullName>Zinc finger protein with KRAB and SCAN domains 5</fullName>
    </recommendedName>
    <alternativeName>
        <fullName>Zinc finger protein 95</fullName>
        <shortName>Zfp-95</shortName>
    </alternativeName>
</protein>
<reference key="1">
    <citation type="journal article" date="2003" name="FEBS Lett.">
        <title>Three novel spermatogenesis-specific zinc finger genes.</title>
        <authorList>
            <person name="Weissig H."/>
            <person name="Narisawa S."/>
            <person name="Sikstrom C."/>
            <person name="Olsson P.G."/>
            <person name="McCarrey J.R."/>
            <person name="Tsonis P.A."/>
            <person name="Del Rio-Tsonis K."/>
            <person name="Millan J.L."/>
        </authorList>
    </citation>
    <scope>NUCLEOTIDE SEQUENCE [MRNA]</scope>
    <scope>TISSUE SPECIFICITY</scope>
</reference>
<reference key="2">
    <citation type="journal article" date="2009" name="PLoS Biol.">
        <title>Lineage-specific biology revealed by a finished genome assembly of the mouse.</title>
        <authorList>
            <person name="Church D.M."/>
            <person name="Goodstadt L."/>
            <person name="Hillier L.W."/>
            <person name="Zody M.C."/>
            <person name="Goldstein S."/>
            <person name="She X."/>
            <person name="Bult C.J."/>
            <person name="Agarwala R."/>
            <person name="Cherry J.L."/>
            <person name="DiCuccio M."/>
            <person name="Hlavina W."/>
            <person name="Kapustin Y."/>
            <person name="Meric P."/>
            <person name="Maglott D."/>
            <person name="Birtle Z."/>
            <person name="Marques A.C."/>
            <person name="Graves T."/>
            <person name="Zhou S."/>
            <person name="Teague B."/>
            <person name="Potamousis K."/>
            <person name="Churas C."/>
            <person name="Place M."/>
            <person name="Herschleb J."/>
            <person name="Runnheim R."/>
            <person name="Forrest D."/>
            <person name="Amos-Landgraf J."/>
            <person name="Schwartz D.C."/>
            <person name="Cheng Z."/>
            <person name="Lindblad-Toh K."/>
            <person name="Eichler E.E."/>
            <person name="Ponting C.P."/>
        </authorList>
    </citation>
    <scope>NUCLEOTIDE SEQUENCE [LARGE SCALE GENOMIC DNA]</scope>
    <source>
        <strain>C57BL/6J</strain>
    </source>
</reference>
<gene>
    <name type="primary">Zkscan5</name>
    <name type="synonym">Zfp95</name>
</gene>
<organism>
    <name type="scientific">Mus musculus</name>
    <name type="common">Mouse</name>
    <dbReference type="NCBI Taxonomy" id="10090"/>
    <lineage>
        <taxon>Eukaryota</taxon>
        <taxon>Metazoa</taxon>
        <taxon>Chordata</taxon>
        <taxon>Craniata</taxon>
        <taxon>Vertebrata</taxon>
        <taxon>Euteleostomi</taxon>
        <taxon>Mammalia</taxon>
        <taxon>Eutheria</taxon>
        <taxon>Euarchontoglires</taxon>
        <taxon>Glires</taxon>
        <taxon>Rodentia</taxon>
        <taxon>Myomorpha</taxon>
        <taxon>Muroidea</taxon>
        <taxon>Muridae</taxon>
        <taxon>Murinae</taxon>
        <taxon>Mus</taxon>
        <taxon>Mus</taxon>
    </lineage>
</organism>
<keyword id="KW-0238">DNA-binding</keyword>
<keyword id="KW-1017">Isopeptide bond</keyword>
<keyword id="KW-0479">Metal-binding</keyword>
<keyword id="KW-0539">Nucleus</keyword>
<keyword id="KW-1185">Reference proteome</keyword>
<keyword id="KW-0677">Repeat</keyword>
<keyword id="KW-0804">Transcription</keyword>
<keyword id="KW-0805">Transcription regulation</keyword>
<keyword id="KW-0832">Ubl conjugation</keyword>
<keyword id="KW-0862">Zinc</keyword>
<keyword id="KW-0863">Zinc-finger</keyword>
<name>ZKSC5_MOUSE</name>
<dbReference type="EMBL" id="U62907">
    <property type="protein sequence ID" value="AAD00103.1"/>
    <property type="molecule type" value="mRNA"/>
</dbReference>
<dbReference type="EMBL" id="AC127411">
    <property type="status" value="NOT_ANNOTATED_CDS"/>
    <property type="molecule type" value="Genomic_DNA"/>
</dbReference>
<dbReference type="CCDS" id="CCDS39386.1"/>
<dbReference type="RefSeq" id="NP_057892.2">
    <property type="nucleotide sequence ID" value="NM_016683.3"/>
</dbReference>
<dbReference type="SMR" id="Q9Z1D8"/>
<dbReference type="FunCoup" id="Q9Z1D8">
    <property type="interactions" value="1023"/>
</dbReference>
<dbReference type="STRING" id="10090.ENSMUSP00000082814"/>
<dbReference type="iPTMnet" id="Q9Z1D8"/>
<dbReference type="PhosphoSitePlus" id="Q9Z1D8"/>
<dbReference type="jPOST" id="Q9Z1D8"/>
<dbReference type="PaxDb" id="10090-ENSMUSP00000082814"/>
<dbReference type="ProteomicsDB" id="299562"/>
<dbReference type="Antibodypedia" id="30392">
    <property type="antibodies" value="119 antibodies from 21 providers"/>
</dbReference>
<dbReference type="DNASU" id="22757"/>
<dbReference type="Ensembl" id="ENSMUST00000085671.10">
    <property type="protein sequence ID" value="ENSMUSP00000082814.4"/>
    <property type="gene ID" value="ENSMUSG00000055991.16"/>
</dbReference>
<dbReference type="GeneID" id="22757"/>
<dbReference type="KEGG" id="mmu:22757"/>
<dbReference type="UCSC" id="uc009amn.2">
    <property type="organism name" value="mouse"/>
</dbReference>
<dbReference type="AGR" id="MGI:107533"/>
<dbReference type="CTD" id="23660"/>
<dbReference type="MGI" id="MGI:107533">
    <property type="gene designation" value="Zkscan5"/>
</dbReference>
<dbReference type="VEuPathDB" id="HostDB:ENSMUSG00000055991"/>
<dbReference type="eggNOG" id="KOG1721">
    <property type="taxonomic scope" value="Eukaryota"/>
</dbReference>
<dbReference type="GeneTree" id="ENSGT00940000162299"/>
<dbReference type="HOGENOM" id="CLU_002678_23_3_1"/>
<dbReference type="InParanoid" id="Q9Z1D8"/>
<dbReference type="OMA" id="KSQRCND"/>
<dbReference type="OrthoDB" id="6077919at2759"/>
<dbReference type="PhylomeDB" id="Q9Z1D8"/>
<dbReference type="TreeFam" id="TF338146"/>
<dbReference type="Reactome" id="R-MMU-212436">
    <property type="pathway name" value="Generic Transcription Pathway"/>
</dbReference>
<dbReference type="BioGRID-ORCS" id="22757">
    <property type="hits" value="1 hit in 77 CRISPR screens"/>
</dbReference>
<dbReference type="ChiTaRS" id="Zkscan5">
    <property type="organism name" value="mouse"/>
</dbReference>
<dbReference type="PRO" id="PR:Q9Z1D8"/>
<dbReference type="Proteomes" id="UP000000589">
    <property type="component" value="Chromosome 5"/>
</dbReference>
<dbReference type="RNAct" id="Q9Z1D8">
    <property type="molecule type" value="protein"/>
</dbReference>
<dbReference type="Bgee" id="ENSMUSG00000055991">
    <property type="expression patterns" value="Expressed in secondary oocyte and 240 other cell types or tissues"/>
</dbReference>
<dbReference type="ExpressionAtlas" id="Q9Z1D8">
    <property type="expression patterns" value="baseline and differential"/>
</dbReference>
<dbReference type="GO" id="GO:0005634">
    <property type="term" value="C:nucleus"/>
    <property type="evidence" value="ECO:0007669"/>
    <property type="project" value="UniProtKB-SubCell"/>
</dbReference>
<dbReference type="GO" id="GO:0003677">
    <property type="term" value="F:DNA binding"/>
    <property type="evidence" value="ECO:0007669"/>
    <property type="project" value="UniProtKB-KW"/>
</dbReference>
<dbReference type="GO" id="GO:0008270">
    <property type="term" value="F:zinc ion binding"/>
    <property type="evidence" value="ECO:0007669"/>
    <property type="project" value="UniProtKB-KW"/>
</dbReference>
<dbReference type="GO" id="GO:0006355">
    <property type="term" value="P:regulation of DNA-templated transcription"/>
    <property type="evidence" value="ECO:0007669"/>
    <property type="project" value="InterPro"/>
</dbReference>
<dbReference type="CDD" id="cd07765">
    <property type="entry name" value="KRAB_A-box"/>
    <property type="match status" value="1"/>
</dbReference>
<dbReference type="CDD" id="cd07936">
    <property type="entry name" value="SCAN"/>
    <property type="match status" value="1"/>
</dbReference>
<dbReference type="FunFam" id="3.30.160.60:FF:000295">
    <property type="entry name" value="zinc finger protein 19"/>
    <property type="match status" value="2"/>
</dbReference>
<dbReference type="FunFam" id="3.30.160.60:FF:002005">
    <property type="entry name" value="Zinc finger protein 200"/>
    <property type="match status" value="1"/>
</dbReference>
<dbReference type="FunFam" id="3.30.160.60:FF:001158">
    <property type="entry name" value="zinc finger protein 22"/>
    <property type="match status" value="1"/>
</dbReference>
<dbReference type="FunFam" id="1.10.4020.10:FF:000001">
    <property type="entry name" value="zinc finger protein 263 isoform X1"/>
    <property type="match status" value="1"/>
</dbReference>
<dbReference type="FunFam" id="3.30.160.60:FF:000016">
    <property type="entry name" value="zinc finger protein 37 homolog"/>
    <property type="match status" value="1"/>
</dbReference>
<dbReference type="FunFam" id="3.30.160.60:FF:001898">
    <property type="entry name" value="Zinc finger protein with KRAB and SCAN domains 5"/>
    <property type="match status" value="1"/>
</dbReference>
<dbReference type="FunFam" id="3.30.160.60:FF:000509">
    <property type="entry name" value="zinc finger protein with KRAB and SCAN domains 5"/>
    <property type="match status" value="1"/>
</dbReference>
<dbReference type="FunFam" id="3.30.160.60:FF:000307">
    <property type="entry name" value="Zinc finger protein ZFP69 isoform 1"/>
    <property type="match status" value="1"/>
</dbReference>
<dbReference type="FunFam" id="3.30.160.60:FF:000642">
    <property type="entry name" value="Zinc finger with KRAB and SCAN domains 2"/>
    <property type="match status" value="2"/>
</dbReference>
<dbReference type="FunFam" id="3.30.160.60:FF:001643">
    <property type="entry name" value="Zinc finger with KRAB and SCAN domains 5"/>
    <property type="match status" value="1"/>
</dbReference>
<dbReference type="Gene3D" id="6.10.140.140">
    <property type="match status" value="1"/>
</dbReference>
<dbReference type="Gene3D" id="3.30.160.60">
    <property type="entry name" value="Classic Zinc Finger"/>
    <property type="match status" value="12"/>
</dbReference>
<dbReference type="Gene3D" id="1.10.4020.10">
    <property type="entry name" value="DNA breaking-rejoining enzymes"/>
    <property type="match status" value="1"/>
</dbReference>
<dbReference type="InterPro" id="IPR001909">
    <property type="entry name" value="KRAB"/>
</dbReference>
<dbReference type="InterPro" id="IPR036051">
    <property type="entry name" value="KRAB_dom_sf"/>
</dbReference>
<dbReference type="InterPro" id="IPR003309">
    <property type="entry name" value="SCAN_dom"/>
</dbReference>
<dbReference type="InterPro" id="IPR038269">
    <property type="entry name" value="SCAN_sf"/>
</dbReference>
<dbReference type="InterPro" id="IPR036236">
    <property type="entry name" value="Znf_C2H2_sf"/>
</dbReference>
<dbReference type="InterPro" id="IPR013087">
    <property type="entry name" value="Znf_C2H2_type"/>
</dbReference>
<dbReference type="PANTHER" id="PTHR24393:SF15">
    <property type="entry name" value="IP01243P-RELATED"/>
    <property type="match status" value="1"/>
</dbReference>
<dbReference type="PANTHER" id="PTHR24393">
    <property type="entry name" value="ZINC FINGER PROTEIN"/>
    <property type="match status" value="1"/>
</dbReference>
<dbReference type="Pfam" id="PF01352">
    <property type="entry name" value="KRAB"/>
    <property type="match status" value="1"/>
</dbReference>
<dbReference type="Pfam" id="PF02023">
    <property type="entry name" value="SCAN"/>
    <property type="match status" value="1"/>
</dbReference>
<dbReference type="Pfam" id="PF00096">
    <property type="entry name" value="zf-C2H2"/>
    <property type="match status" value="10"/>
</dbReference>
<dbReference type="SMART" id="SM00349">
    <property type="entry name" value="KRAB"/>
    <property type="match status" value="1"/>
</dbReference>
<dbReference type="SMART" id="SM00431">
    <property type="entry name" value="SCAN"/>
    <property type="match status" value="1"/>
</dbReference>
<dbReference type="SMART" id="SM00355">
    <property type="entry name" value="ZnF_C2H2"/>
    <property type="match status" value="12"/>
</dbReference>
<dbReference type="SUPFAM" id="SSF57667">
    <property type="entry name" value="beta-beta-alpha zinc fingers"/>
    <property type="match status" value="7"/>
</dbReference>
<dbReference type="SUPFAM" id="SSF109640">
    <property type="entry name" value="KRAB domain (Kruppel-associated box)"/>
    <property type="match status" value="1"/>
</dbReference>
<dbReference type="SUPFAM" id="SSF47353">
    <property type="entry name" value="Retrovirus capsid dimerization domain-like"/>
    <property type="match status" value="1"/>
</dbReference>
<dbReference type="PROSITE" id="PS50805">
    <property type="entry name" value="KRAB"/>
    <property type="match status" value="1"/>
</dbReference>
<dbReference type="PROSITE" id="PS50804">
    <property type="entry name" value="SCAN_BOX"/>
    <property type="match status" value="1"/>
</dbReference>
<dbReference type="PROSITE" id="PS00028">
    <property type="entry name" value="ZINC_FINGER_C2H2_1"/>
    <property type="match status" value="12"/>
</dbReference>
<dbReference type="PROSITE" id="PS50157">
    <property type="entry name" value="ZINC_FINGER_C2H2_2"/>
    <property type="match status" value="12"/>
</dbReference>
<evidence type="ECO:0000250" key="1">
    <source>
        <dbReference type="UniProtKB" id="Q9Y2L8"/>
    </source>
</evidence>
<evidence type="ECO:0000255" key="2">
    <source>
        <dbReference type="PROSITE-ProRule" id="PRU00042"/>
    </source>
</evidence>
<evidence type="ECO:0000255" key="3">
    <source>
        <dbReference type="PROSITE-ProRule" id="PRU00119"/>
    </source>
</evidence>
<evidence type="ECO:0000255" key="4">
    <source>
        <dbReference type="PROSITE-ProRule" id="PRU00187"/>
    </source>
</evidence>
<evidence type="ECO:0000256" key="5">
    <source>
        <dbReference type="SAM" id="MobiDB-lite"/>
    </source>
</evidence>
<evidence type="ECO:0000269" key="6">
    <source>
    </source>
</evidence>
<evidence type="ECO:0000305" key="7"/>
<comment type="function">
    <text>May be involved in transcriptional regulation.</text>
</comment>
<comment type="subcellular location">
    <subcellularLocation>
        <location evidence="4">Nucleus</location>
    </subcellularLocation>
</comment>
<comment type="tissue specificity">
    <text evidence="6">Testis specific.</text>
</comment>
<comment type="similarity">
    <text evidence="7">Belongs to the krueppel C2H2-type zinc-finger protein family.</text>
</comment>
<sequence>MIMTESRAVIHLEPPAETSQEQADLLIVKVEEEDCSWMQGYNRPVLETFYQRFKHFQYHEAAGPRDALSQLRVLCCEWLRPELHTKEQILELLVLEQFLTILPEEFQAWVREHHPESGEEAVAVIESIQRELEERRQQIATSPEVLPQKMVPPGATQESFSHQCLPVEAQPERESQNLLEENALPVLQVSSVPLKDSQELTDSLLSDGPQKLVKTEDVADVAVSFILEEWAHLDQSQKSLGRDSRKEDCESTTPVDYEPKEGNLEFTVQQVSDAADPHWVAAERTEKNGVQRPESGEVSDLKDMVPRWQVNPTSGNPRQKRPLRSGPDVNRKQKSNGERGHRCGDCGKFFLQASNFIQHRRIHTGEKPFKCGECGKSYNQRVHLTQHQRVHTGEKPYKCQVCGKAFRVSSHLVQHHSVHSGERPYGCNECGKSFGRHSHLIEHLKRHFREKSQRCSDRRSKNTKLNIKQIPGLSEADLELSGEVQRNACQAEGHSEGCEHQDGQQGVVMKETLGQSSSKRTDCNEFSYVHKKSSPGERPHQCNECGKSFIQSAHLIQHRRIHTGEKPFRCEECGKSYNQRVHLTQHHRVHTGEKPYACHLCGKAFRVRSHLVQHQSVHSRERPFKCNECGKGFGRRSHLAGHLRLHSRDKSHQCHECGEIFFQYVSLLEHQVLHVGQKSEKNGICEEAYSWNLTVIKDKKLELQEQPYQCDSCGKAFSYSSDLIQHYRTHSAEKPQKCDACRDSTCQCPHIKQQQKSCPSGKSHQCNECGRGFSLKSHLSQHQRIHTGEKPLQCKECGMSFSWSCSLFKHLRSHERTDP</sequence>
<accession>Q9Z1D8</accession>
<accession>E9QLY2</accession>
<feature type="chain" id="PRO_0000047316" description="Zinc finger protein with KRAB and SCAN domains 5">
    <location>
        <begin position="1"/>
        <end position="819"/>
    </location>
</feature>
<feature type="domain" description="SCAN box" evidence="4">
    <location>
        <begin position="51"/>
        <end position="132"/>
    </location>
</feature>
<feature type="domain" description="KRAB" evidence="3">
    <location>
        <begin position="216"/>
        <end position="287"/>
    </location>
</feature>
<feature type="zinc finger region" description="C2H2-type 1" evidence="2">
    <location>
        <begin position="341"/>
        <end position="363"/>
    </location>
</feature>
<feature type="zinc finger region" description="C2H2-type 2" evidence="2">
    <location>
        <begin position="369"/>
        <end position="391"/>
    </location>
</feature>
<feature type="zinc finger region" description="C2H2-type 3" evidence="2">
    <location>
        <begin position="397"/>
        <end position="419"/>
    </location>
</feature>
<feature type="zinc finger region" description="C2H2-type 4" evidence="2">
    <location>
        <begin position="425"/>
        <end position="447"/>
    </location>
</feature>
<feature type="zinc finger region" description="C2H2-type 5" evidence="2">
    <location>
        <begin position="540"/>
        <end position="562"/>
    </location>
</feature>
<feature type="zinc finger region" description="C2H2-type 6" evidence="2">
    <location>
        <begin position="568"/>
        <end position="590"/>
    </location>
</feature>
<feature type="zinc finger region" description="C2H2-type 7" evidence="2">
    <location>
        <begin position="596"/>
        <end position="618"/>
    </location>
</feature>
<feature type="zinc finger region" description="C2H2-type 8" evidence="2">
    <location>
        <begin position="624"/>
        <end position="646"/>
    </location>
</feature>
<feature type="zinc finger region" description="C2H2-type 9" evidence="2">
    <location>
        <begin position="652"/>
        <end position="674"/>
    </location>
</feature>
<feature type="zinc finger region" description="C2H2-type 10" evidence="2">
    <location>
        <begin position="708"/>
        <end position="730"/>
    </location>
</feature>
<feature type="zinc finger region" description="C2H2-type 11" evidence="2">
    <location>
        <begin position="764"/>
        <end position="786"/>
    </location>
</feature>
<feature type="zinc finger region" description="C2H2-type 12" evidence="2">
    <location>
        <begin position="792"/>
        <end position="814"/>
    </location>
</feature>
<feature type="region of interest" description="Disordered" evidence="5">
    <location>
        <begin position="236"/>
        <end position="263"/>
    </location>
</feature>
<feature type="region of interest" description="Disordered" evidence="5">
    <location>
        <begin position="283"/>
        <end position="340"/>
    </location>
</feature>
<feature type="compositionally biased region" description="Basic and acidic residues" evidence="5">
    <location>
        <begin position="240"/>
        <end position="249"/>
    </location>
</feature>
<feature type="compositionally biased region" description="Basic and acidic residues" evidence="5">
    <location>
        <begin position="329"/>
        <end position="340"/>
    </location>
</feature>
<feature type="cross-link" description="Glycyl lysine isopeptide (Lys-Gly) (interchain with G-Cter in SUMO2)" evidence="1">
    <location>
        <position position="214"/>
    </location>
</feature>
<feature type="cross-link" description="Glycyl lysine isopeptide (Lys-Gly) (interchain with G-Cter in SUMO2)" evidence="1">
    <location>
        <position position="246"/>
    </location>
</feature>
<feature type="cross-link" description="Glycyl lysine isopeptide (Lys-Gly) (interchain with G-Cter in SUMO2)" evidence="1">
    <location>
        <position position="302"/>
    </location>
</feature>
<feature type="cross-link" description="Glycyl lysine isopeptide (Lys-Gly) (interchain with G-Cter in SUMO2)" evidence="1">
    <location>
        <position position="700"/>
    </location>
</feature>
<feature type="cross-link" description="Glycyl lysine isopeptide (Lys-Gly) (interchain with G-Cter in SUMO2)" evidence="1">
    <location>
        <position position="776"/>
    </location>
</feature>
<feature type="sequence conflict" description="In Ref. 1; AAD00103." evidence="7" ref="1">
    <original>V</original>
    <variation>A</variation>
    <location>
        <position position="186"/>
    </location>
</feature>
<feature type="sequence conflict" description="In Ref. 1; AAD00103." evidence="7" ref="1">
    <original>T</original>
    <variation>I</variation>
    <location>
        <position position="584"/>
    </location>
</feature>
<feature type="sequence conflict" description="In Ref. 1; AAD00103." evidence="7" ref="1">
    <original>R</original>
    <variation>T</variation>
    <location>
        <position position="742"/>
    </location>
</feature>
<feature type="sequence conflict" description="In Ref. 1; AAD00103." evidence="7" ref="1">
    <original>L</original>
    <variation>F</variation>
    <location>
        <position position="792"/>
    </location>
</feature>
<feature type="sequence conflict" description="In Ref. 1; AAD00103." evidence="7" ref="1">
    <original>L</original>
    <variation>F</variation>
    <location>
        <position position="807"/>
    </location>
</feature>